<accession>P05562</accession>
<comment type="subcellular location">
    <subcellularLocation>
        <location>Secreted</location>
    </subcellularLocation>
</comment>
<comment type="domain">
    <text>Avian ovomucoid consists of three homologous, tandem Kazal family inhibitory domains.</text>
</comment>
<feature type="chain" id="PRO_0000073107" description="Ovomucoid">
    <location>
        <begin position="1" status="less than"/>
        <end position="51" status="greater than"/>
    </location>
</feature>
<feature type="domain" description="Kazal-like" evidence="1">
    <location>
        <begin position="3"/>
        <end position="51"/>
    </location>
</feature>
<feature type="site" description="Reactive bond 3">
    <location>
        <begin position="15"/>
        <end position="16"/>
    </location>
</feature>
<feature type="glycosylation site" description="N-linked (GlcNAc...) asparagine">
    <location>
        <position position="42"/>
    </location>
</feature>
<feature type="disulfide bond">
    <location>
        <begin position="5"/>
        <end position="35"/>
    </location>
</feature>
<feature type="disulfide bond">
    <location>
        <begin position="13"/>
        <end position="32"/>
    </location>
</feature>
<feature type="disulfide bond">
    <location>
        <begin position="21"/>
        <end position="51"/>
    </location>
</feature>
<feature type="non-terminal residue">
    <location>
        <position position="1"/>
    </location>
</feature>
<feature type="non-terminal residue">
    <location>
        <position position="51"/>
    </location>
</feature>
<dbReference type="PIR" id="E31439">
    <property type="entry name" value="E31439"/>
</dbReference>
<dbReference type="SMR" id="P05562"/>
<dbReference type="GO" id="GO:0005576">
    <property type="term" value="C:extracellular region"/>
    <property type="evidence" value="ECO:0007669"/>
    <property type="project" value="UniProtKB-SubCell"/>
</dbReference>
<dbReference type="GO" id="GO:0004867">
    <property type="term" value="F:serine-type endopeptidase inhibitor activity"/>
    <property type="evidence" value="ECO:0007669"/>
    <property type="project" value="UniProtKB-KW"/>
</dbReference>
<dbReference type="CDD" id="cd00104">
    <property type="entry name" value="KAZAL_FS"/>
    <property type="match status" value="1"/>
</dbReference>
<dbReference type="FunFam" id="3.30.60.30:FF:000037">
    <property type="entry name" value="Ovomucoid"/>
    <property type="match status" value="1"/>
</dbReference>
<dbReference type="Gene3D" id="3.30.60.30">
    <property type="match status" value="1"/>
</dbReference>
<dbReference type="InterPro" id="IPR051597">
    <property type="entry name" value="Bifunctional_prot_inhibitor"/>
</dbReference>
<dbReference type="InterPro" id="IPR002350">
    <property type="entry name" value="Kazal_dom"/>
</dbReference>
<dbReference type="InterPro" id="IPR036058">
    <property type="entry name" value="Kazal_dom_sf"/>
</dbReference>
<dbReference type="InterPro" id="IPR001239">
    <property type="entry name" value="Prot_inh_Kazal-m"/>
</dbReference>
<dbReference type="PANTHER" id="PTHR47729:SF1">
    <property type="entry name" value="OVOMUCOID-LIKE-RELATED"/>
    <property type="match status" value="1"/>
</dbReference>
<dbReference type="PANTHER" id="PTHR47729">
    <property type="entry name" value="SERINE PEPTIDASE INHIBITOR, KAZAL TYPE 2, TANDEM DUPLICATE 1-RELATED"/>
    <property type="match status" value="1"/>
</dbReference>
<dbReference type="Pfam" id="PF00050">
    <property type="entry name" value="Kazal_1"/>
    <property type="match status" value="1"/>
</dbReference>
<dbReference type="PRINTS" id="PR00290">
    <property type="entry name" value="KAZALINHBTR"/>
</dbReference>
<dbReference type="SMART" id="SM00280">
    <property type="entry name" value="KAZAL"/>
    <property type="match status" value="1"/>
</dbReference>
<dbReference type="SUPFAM" id="SSF100895">
    <property type="entry name" value="Kazal-type serine protease inhibitors"/>
    <property type="match status" value="1"/>
</dbReference>
<dbReference type="PROSITE" id="PS00282">
    <property type="entry name" value="KAZAL_1"/>
    <property type="match status" value="1"/>
</dbReference>
<dbReference type="PROSITE" id="PS51465">
    <property type="entry name" value="KAZAL_2"/>
    <property type="match status" value="1"/>
</dbReference>
<protein>
    <recommendedName>
        <fullName>Ovomucoid</fullName>
    </recommendedName>
</protein>
<name>IOVO_EUDEL</name>
<sequence>VSIDCSGYPKPACTLEFFPLCGSDNQTYSNKCAFCNAAVEKNVTLNHIGEC</sequence>
<organism>
    <name type="scientific">Eudromia elegans</name>
    <name type="common">Elegant crested-tinamou</name>
    <dbReference type="NCBI Taxonomy" id="8805"/>
    <lineage>
        <taxon>Eukaryota</taxon>
        <taxon>Metazoa</taxon>
        <taxon>Chordata</taxon>
        <taxon>Craniata</taxon>
        <taxon>Vertebrata</taxon>
        <taxon>Euteleostomi</taxon>
        <taxon>Archelosauria</taxon>
        <taxon>Archosauria</taxon>
        <taxon>Dinosauria</taxon>
        <taxon>Saurischia</taxon>
        <taxon>Theropoda</taxon>
        <taxon>Coelurosauria</taxon>
        <taxon>Aves</taxon>
        <taxon>Palaeognathae</taxon>
        <taxon>Tinamiformes</taxon>
        <taxon>Tinamidae</taxon>
        <taxon>Eudromia</taxon>
    </lineage>
</organism>
<keyword id="KW-0903">Direct protein sequencing</keyword>
<keyword id="KW-1015">Disulfide bond</keyword>
<keyword id="KW-0325">Glycoprotein</keyword>
<keyword id="KW-0646">Protease inhibitor</keyword>
<keyword id="KW-0677">Repeat</keyword>
<keyword id="KW-0964">Secreted</keyword>
<keyword id="KW-0722">Serine protease inhibitor</keyword>
<proteinExistence type="evidence at protein level"/>
<reference key="1">
    <citation type="journal article" date="1987" name="Biochemistry">
        <title>Ovomucoid third domains from 100 avian species: isolation, sequences, and hypervariability of enzyme-inhibitor contact residues.</title>
        <authorList>
            <person name="Laskowski M. Jr."/>
            <person name="Kato I."/>
            <person name="Ardelt W."/>
            <person name="Cook J."/>
            <person name="Denton A."/>
            <person name="Empie M.W."/>
            <person name="Kohr W.J."/>
            <person name="Park S.J."/>
            <person name="Parks K."/>
            <person name="Schatzley B.L."/>
            <person name="Schoenberger O.L."/>
            <person name="Tashiro M."/>
            <person name="Vichot G."/>
            <person name="Whatley H.E."/>
            <person name="Wieczorek A."/>
            <person name="Wieczorek M."/>
        </authorList>
    </citation>
    <scope>PROTEIN SEQUENCE</scope>
</reference>
<evidence type="ECO:0000255" key="1">
    <source>
        <dbReference type="PROSITE-ProRule" id="PRU00798"/>
    </source>
</evidence>